<evidence type="ECO:0000250" key="1">
    <source>
        <dbReference type="UniProtKB" id="P77748"/>
    </source>
</evidence>
<evidence type="ECO:0000250" key="2">
    <source>
        <dbReference type="UniProtKB" id="Q8N465"/>
    </source>
</evidence>
<evidence type="ECO:0000255" key="3">
    <source>
        <dbReference type="PROSITE-ProRule" id="PRU00711"/>
    </source>
</evidence>
<evidence type="ECO:0000255" key="4">
    <source>
        <dbReference type="PROSITE-ProRule" id="PRU00718"/>
    </source>
</evidence>
<evidence type="ECO:0000305" key="5"/>
<reference key="1">
    <citation type="journal article" date="1995" name="Science">
        <title>Whole-genome random sequencing and assembly of Haemophilus influenzae Rd.</title>
        <authorList>
            <person name="Fleischmann R.D."/>
            <person name="Adams M.D."/>
            <person name="White O."/>
            <person name="Clayton R.A."/>
            <person name="Kirkness E.F."/>
            <person name="Kerlavage A.R."/>
            <person name="Bult C.J."/>
            <person name="Tomb J.-F."/>
            <person name="Dougherty B.A."/>
            <person name="Merrick J.M."/>
            <person name="McKenney K."/>
            <person name="Sutton G.G."/>
            <person name="FitzHugh W."/>
            <person name="Fields C.A."/>
            <person name="Gocayne J.D."/>
            <person name="Scott J.D."/>
            <person name="Shirley R."/>
            <person name="Liu L.-I."/>
            <person name="Glodek A."/>
            <person name="Kelley J.M."/>
            <person name="Weidman J.F."/>
            <person name="Phillips C.A."/>
            <person name="Spriggs T."/>
            <person name="Hedblom E."/>
            <person name="Cotton M.D."/>
            <person name="Utterback T.R."/>
            <person name="Hanna M.C."/>
            <person name="Nguyen D.T."/>
            <person name="Saudek D.M."/>
            <person name="Brandon R.C."/>
            <person name="Fine L.D."/>
            <person name="Fritchman J.L."/>
            <person name="Fuhrmann J.L."/>
            <person name="Geoghagen N.S.M."/>
            <person name="Gnehm C.L."/>
            <person name="McDonald L.A."/>
            <person name="Small K.V."/>
            <person name="Fraser C.M."/>
            <person name="Smith H.O."/>
            <person name="Venter J.C."/>
        </authorList>
    </citation>
    <scope>NUCLEOTIDE SEQUENCE [LARGE SCALE GENOMIC DNA]</scope>
    <source>
        <strain>ATCC 51907 / DSM 11121 / KW20 / Rd</strain>
    </source>
</reference>
<reference key="2">
    <citation type="journal article" date="2000" name="Electrophoresis">
        <title>Two-dimensional map of the proteome of Haemophilus influenzae.</title>
        <authorList>
            <person name="Langen H."/>
            <person name="Takacs B."/>
            <person name="Evers S."/>
            <person name="Berndt P."/>
            <person name="Lahm H.W."/>
            <person name="Wipf B."/>
            <person name="Gray C."/>
            <person name="Fountoulakis M."/>
        </authorList>
    </citation>
    <scope>IDENTIFICATION BY MASS SPECTROMETRY</scope>
    <source>
        <strain>ATCC 51907 / DSM 11121 / KW20 / Rd</strain>
    </source>
</reference>
<comment type="function">
    <text evidence="1">Catalyzes the oxidation of D-2-hydroxyglutarate (D-2-HGA) to 2-oxoglutarate. Provides the way to recycle D-2-HGA produced during L-serine synthesis by SerA, by converting it back to 2-oxoglutarate. The physiological molecule that functions as the primary electron acceptor during D-2-HGA oxidation is unknown.</text>
</comment>
<comment type="catalytic activity">
    <reaction evidence="1">
        <text>(R)-2-hydroxyglutarate + A = 2-oxoglutarate + AH2</text>
        <dbReference type="Rhea" id="RHEA:38295"/>
        <dbReference type="ChEBI" id="CHEBI:13193"/>
        <dbReference type="ChEBI" id="CHEBI:15801"/>
        <dbReference type="ChEBI" id="CHEBI:16810"/>
        <dbReference type="ChEBI" id="CHEBI:17499"/>
        <dbReference type="EC" id="1.1.99.39"/>
    </reaction>
    <physiologicalReaction direction="left-to-right" evidence="1">
        <dbReference type="Rhea" id="RHEA:38296"/>
    </physiologicalReaction>
</comment>
<comment type="cofactor">
    <cofactor evidence="1">
        <name>[4Fe-4S] cluster</name>
        <dbReference type="ChEBI" id="CHEBI:49883"/>
    </cofactor>
</comment>
<comment type="cofactor">
    <cofactor evidence="1">
        <name>FAD</name>
        <dbReference type="ChEBI" id="CHEBI:57692"/>
    </cofactor>
</comment>
<comment type="subunit">
    <text evidence="1">Homotetramer.</text>
</comment>
<comment type="similarity">
    <text evidence="5">In the N-terminal section; belongs to the FAD-binding oxidoreductase/transferase type 4 family.</text>
</comment>
<proteinExistence type="evidence at protein level"/>
<feature type="chain" id="PRO_0000168995" description="D-2-hydroxyglutarate dehydrogenase">
    <location>
        <begin position="1"/>
        <end position="1027"/>
    </location>
</feature>
<feature type="domain" description="FAD-binding PCMH-type" evidence="4">
    <location>
        <begin position="48"/>
        <end position="284"/>
    </location>
</feature>
<feature type="domain" description="4Fe-4S ferredoxin-type" evidence="3">
    <location>
        <begin position="665"/>
        <end position="696"/>
    </location>
</feature>
<feature type="binding site" evidence="2">
    <location>
        <position position="405"/>
    </location>
    <ligand>
        <name>(R)-2-hydroxyglutarate</name>
        <dbReference type="ChEBI" id="CHEBI:15801"/>
    </ligand>
</feature>
<feature type="binding site" evidence="2">
    <location>
        <position position="503"/>
    </location>
    <ligand>
        <name>(R)-2-hydroxyglutarate</name>
        <dbReference type="ChEBI" id="CHEBI:15801"/>
    </ligand>
</feature>
<feature type="binding site" evidence="3">
    <location>
        <position position="674"/>
    </location>
    <ligand>
        <name>[4Fe-4S] cluster</name>
        <dbReference type="ChEBI" id="CHEBI:49883"/>
    </ligand>
</feature>
<feature type="binding site" evidence="3">
    <location>
        <position position="677"/>
    </location>
    <ligand>
        <name>[4Fe-4S] cluster</name>
        <dbReference type="ChEBI" id="CHEBI:49883"/>
    </ligand>
</feature>
<feature type="binding site" evidence="3">
    <location>
        <position position="680"/>
    </location>
    <ligand>
        <name>[4Fe-4S] cluster</name>
        <dbReference type="ChEBI" id="CHEBI:49883"/>
    </ligand>
</feature>
<feature type="binding site" evidence="3">
    <location>
        <position position="684"/>
    </location>
    <ligand>
        <name>[4Fe-4S] cluster</name>
        <dbReference type="ChEBI" id="CHEBI:49883"/>
    </ligand>
</feature>
<name>D2HDH_HAEIN</name>
<accession>Q57252</accession>
<accession>O05046</accession>
<dbReference type="EC" id="1.1.99.39" evidence="1"/>
<dbReference type="EMBL" id="L42023">
    <property type="protein sequence ID" value="AAC22818.1"/>
    <property type="molecule type" value="Genomic_DNA"/>
</dbReference>
<dbReference type="PIR" id="B64187">
    <property type="entry name" value="B64187"/>
</dbReference>
<dbReference type="RefSeq" id="NP_439321.1">
    <property type="nucleotide sequence ID" value="NC_000907.1"/>
</dbReference>
<dbReference type="SMR" id="Q57252"/>
<dbReference type="STRING" id="71421.HI_1163"/>
<dbReference type="EnsemblBacteria" id="AAC22818">
    <property type="protein sequence ID" value="AAC22818"/>
    <property type="gene ID" value="HI_1163"/>
</dbReference>
<dbReference type="KEGG" id="hin:HI_1163"/>
<dbReference type="PATRIC" id="fig|71421.8.peg.1215"/>
<dbReference type="eggNOG" id="COG0247">
    <property type="taxonomic scope" value="Bacteria"/>
</dbReference>
<dbReference type="eggNOG" id="COG0277">
    <property type="taxonomic scope" value="Bacteria"/>
</dbReference>
<dbReference type="HOGENOM" id="CLU_010756_1_0_6"/>
<dbReference type="OrthoDB" id="9811557at2"/>
<dbReference type="PhylomeDB" id="Q57252"/>
<dbReference type="BioCyc" id="HINF71421:G1GJ1-1197-MONOMER"/>
<dbReference type="Proteomes" id="UP000000579">
    <property type="component" value="Chromosome"/>
</dbReference>
<dbReference type="GO" id="GO:0051539">
    <property type="term" value="F:4 iron, 4 sulfur cluster binding"/>
    <property type="evidence" value="ECO:0007669"/>
    <property type="project" value="UniProtKB-KW"/>
</dbReference>
<dbReference type="GO" id="GO:0004458">
    <property type="term" value="F:D-lactate dehydrogenase (cytochrome) activity"/>
    <property type="evidence" value="ECO:0000318"/>
    <property type="project" value="GO_Central"/>
</dbReference>
<dbReference type="GO" id="GO:0008720">
    <property type="term" value="F:D-lactate dehydrogenase activity"/>
    <property type="evidence" value="ECO:0000318"/>
    <property type="project" value="GO_Central"/>
</dbReference>
<dbReference type="GO" id="GO:0071949">
    <property type="term" value="F:FAD binding"/>
    <property type="evidence" value="ECO:0007669"/>
    <property type="project" value="InterPro"/>
</dbReference>
<dbReference type="GO" id="GO:0050660">
    <property type="term" value="F:flavin adenine dinucleotide binding"/>
    <property type="evidence" value="ECO:0000318"/>
    <property type="project" value="GO_Central"/>
</dbReference>
<dbReference type="GO" id="GO:0046872">
    <property type="term" value="F:metal ion binding"/>
    <property type="evidence" value="ECO:0007669"/>
    <property type="project" value="UniProtKB-KW"/>
</dbReference>
<dbReference type="GO" id="GO:1903457">
    <property type="term" value="P:lactate catabolic process"/>
    <property type="evidence" value="ECO:0000318"/>
    <property type="project" value="GO_Central"/>
</dbReference>
<dbReference type="FunFam" id="3.30.465.10:FF:000024">
    <property type="entry name" value="Oxidoreductase, FAD-binding protein"/>
    <property type="match status" value="1"/>
</dbReference>
<dbReference type="FunFam" id="3.30.70.2740:FF:000003">
    <property type="entry name" value="Oxidoreductase, FAD-binding, putative"/>
    <property type="match status" value="1"/>
</dbReference>
<dbReference type="Gene3D" id="3.30.465.10">
    <property type="match status" value="1"/>
</dbReference>
<dbReference type="Gene3D" id="3.30.70.2740">
    <property type="match status" value="1"/>
</dbReference>
<dbReference type="InterPro" id="IPR017896">
    <property type="entry name" value="4Fe4S_Fe-S-bd"/>
</dbReference>
<dbReference type="InterPro" id="IPR017900">
    <property type="entry name" value="4Fe4S_Fe_S_CS"/>
</dbReference>
<dbReference type="InterPro" id="IPR004113">
    <property type="entry name" value="FAD-bd_oxidored_4_C"/>
</dbReference>
<dbReference type="InterPro" id="IPR016166">
    <property type="entry name" value="FAD-bd_PCMH"/>
</dbReference>
<dbReference type="InterPro" id="IPR036318">
    <property type="entry name" value="FAD-bd_PCMH-like_sf"/>
</dbReference>
<dbReference type="InterPro" id="IPR016169">
    <property type="entry name" value="FAD-bd_PCMH_sub2"/>
</dbReference>
<dbReference type="InterPro" id="IPR016164">
    <property type="entry name" value="FAD-linked_Oxase-like_C"/>
</dbReference>
<dbReference type="InterPro" id="IPR006094">
    <property type="entry name" value="Oxid_FAD_bind_N"/>
</dbReference>
<dbReference type="PANTHER" id="PTHR11748:SF119">
    <property type="entry name" value="D-2-HYDROXYGLUTARATE DEHYDROGENASE"/>
    <property type="match status" value="1"/>
</dbReference>
<dbReference type="PANTHER" id="PTHR11748">
    <property type="entry name" value="D-LACTATE DEHYDROGENASE"/>
    <property type="match status" value="1"/>
</dbReference>
<dbReference type="Pfam" id="PF02913">
    <property type="entry name" value="FAD-oxidase_C"/>
    <property type="match status" value="1"/>
</dbReference>
<dbReference type="Pfam" id="PF01565">
    <property type="entry name" value="FAD_binding_4"/>
    <property type="match status" value="1"/>
</dbReference>
<dbReference type="SUPFAM" id="SSF46548">
    <property type="entry name" value="alpha-helical ferredoxin"/>
    <property type="match status" value="1"/>
</dbReference>
<dbReference type="SUPFAM" id="SSF56176">
    <property type="entry name" value="FAD-binding/transporter-associated domain-like"/>
    <property type="match status" value="1"/>
</dbReference>
<dbReference type="SUPFAM" id="SSF55103">
    <property type="entry name" value="FAD-linked oxidases, C-terminal domain"/>
    <property type="match status" value="1"/>
</dbReference>
<dbReference type="PROSITE" id="PS00198">
    <property type="entry name" value="4FE4S_FER_1"/>
    <property type="match status" value="1"/>
</dbReference>
<dbReference type="PROSITE" id="PS51379">
    <property type="entry name" value="4FE4S_FER_2"/>
    <property type="match status" value="1"/>
</dbReference>
<dbReference type="PROSITE" id="PS51387">
    <property type="entry name" value="FAD_PCMH"/>
    <property type="match status" value="1"/>
</dbReference>
<gene>
    <name type="ordered locus">HI_1163</name>
</gene>
<keyword id="KW-0004">4Fe-4S</keyword>
<keyword id="KW-0274">FAD</keyword>
<keyword id="KW-0285">Flavoprotein</keyword>
<keyword id="KW-0408">Iron</keyword>
<keyword id="KW-0411">Iron-sulfur</keyword>
<keyword id="KW-0479">Metal-binding</keyword>
<keyword id="KW-0560">Oxidoreductase</keyword>
<keyword id="KW-1185">Reference proteome</keyword>
<organism>
    <name type="scientific">Haemophilus influenzae (strain ATCC 51907 / DSM 11121 / KW20 / Rd)</name>
    <dbReference type="NCBI Taxonomy" id="71421"/>
    <lineage>
        <taxon>Bacteria</taxon>
        <taxon>Pseudomonadati</taxon>
        <taxon>Pseudomonadota</taxon>
        <taxon>Gammaproteobacteria</taxon>
        <taxon>Pasteurellales</taxon>
        <taxon>Pasteurellaceae</taxon>
        <taxon>Haemophilus</taxon>
    </lineage>
</organism>
<protein>
    <recommendedName>
        <fullName evidence="1">D-2-hydroxyglutarate dehydrogenase</fullName>
        <shortName evidence="1">D2HGDH</shortName>
        <ecNumber evidence="1">1.1.99.39</ecNumber>
    </recommendedName>
</protein>
<sequence length="1027" mass="116743">MLPNLNRIPQVEQYVLDYLDDLQCQHFEGDIATNYADRLSLATDNSVYQQLPQAILFPKTVADIVRITKLANLPEYQSISFTPRGGGTGTNGQSINNNIIVDLSRHMTAILELNVKERWVRVQAGVVKDQLNQFLKPHGLFFAPELSTSNRATLGGMINTDASGQGSLQYGKTSNHVLALRAVLINGEILDTSAVNSVDVLENIDALELSESSKKLHQTIAQHCKEKRAAIIKDLPQLNRFLTGYDLKNVFNEDESEFNLTRILTGSEGSLAFICEAKLNLLLIPQYRTLINIKYRSFDAALRNAPFMVKANALSVETVDSKVLNLAKQDIIWHSVNELLTEDEKDPILGLNIVEFAGNNKEKIDRQVTALCRLLDEKIEHNQDHIIGYQVCSDLPSIERIYAMRKKAVGLLGNAKGAAKPIPFVEDTCVPPENLADYISEFRALLDQHNLQYGMFGHVDAGVLHVRPALDLCDKEQVKLFKQISDEVAELTIKYGGLLWGEHGKGVRSHYGEKFFTPELWHELRYIKTLFDPNNRLNPGKICTPLDSKDELYSILSPMRADKDRQIPIQIRDEFKGAMNCNGNGLCFNFDEHSIMCPSMKVSKNRVFSPKGRAAMVREWLRLMANENVSPEQLDFRKTEIKLTALVKRLSNTVQKWRGNYDFSHEVKAAMDTCLACKACASQCPIKIDVPSFRAKFFHFYHSRYLRPTKDHIVANLEIAAPYMAKQAKFFNYFTKLKVTQTLVEKTLGMTDLPLLSEPSLQQQLVEIHYQGKSLEELESLSAVEKNDILFIVQDPYTSYYDAKVIRDFVMLTQKLGFKPILLPFKPNGKAMHIKGFLKRFSKTAQNQAEFLNRMAKLGIPLVGVDPAIVLSYRDEYKEALQEKRGDFHVLTAHEWLKQRLQNADLQEKLKNIAKTDRTLGWYLFPHCTESTFMPNSPKEWQEIFGRFGQQLNVEKVGCCGMAGVFGHEVQNQKMSREIYDVSWHKKLHGKDPHFCLATGYSCRSQVKRYEHVVLKHPVQALLEVLK</sequence>